<dbReference type="EC" id="2.7.1.12"/>
<dbReference type="EMBL" id="U14003">
    <property type="protein sequence ID" value="AAA97165.1"/>
    <property type="molecule type" value="Genomic_DNA"/>
</dbReference>
<dbReference type="EMBL" id="U00096">
    <property type="protein sequence ID" value="AAC77225.1"/>
    <property type="molecule type" value="Genomic_DNA"/>
</dbReference>
<dbReference type="EMBL" id="AP009048">
    <property type="protein sequence ID" value="BAE78265.1"/>
    <property type="molecule type" value="Genomic_DNA"/>
</dbReference>
<dbReference type="EMBL" id="M96355">
    <property type="status" value="NOT_ANNOTATED_CDS"/>
    <property type="molecule type" value="Genomic_DNA"/>
</dbReference>
<dbReference type="PIR" id="S56494">
    <property type="entry name" value="S56494"/>
</dbReference>
<dbReference type="RefSeq" id="NP_418689.1">
    <property type="nucleotide sequence ID" value="NC_000913.3"/>
</dbReference>
<dbReference type="RefSeq" id="WP_000896738.1">
    <property type="nucleotide sequence ID" value="NZ_SSUV01000014.1"/>
</dbReference>
<dbReference type="SMR" id="P39208"/>
<dbReference type="BioGRID" id="4261380">
    <property type="interactions" value="11"/>
</dbReference>
<dbReference type="BioGRID" id="850426">
    <property type="interactions" value="7"/>
</dbReference>
<dbReference type="FunCoup" id="P39208">
    <property type="interactions" value="543"/>
</dbReference>
<dbReference type="IntAct" id="P39208">
    <property type="interactions" value="8"/>
</dbReference>
<dbReference type="STRING" id="511145.b4268"/>
<dbReference type="jPOST" id="P39208"/>
<dbReference type="PaxDb" id="511145-b4268"/>
<dbReference type="EnsemblBacteria" id="AAC77225">
    <property type="protein sequence ID" value="AAC77225"/>
    <property type="gene ID" value="b4268"/>
</dbReference>
<dbReference type="GeneID" id="946066"/>
<dbReference type="KEGG" id="ecj:JW4225"/>
<dbReference type="KEGG" id="eco:b4268"/>
<dbReference type="KEGG" id="ecoc:C3026_23020"/>
<dbReference type="PATRIC" id="fig|1411691.4.peg.2435"/>
<dbReference type="EchoBASE" id="EB2072"/>
<dbReference type="eggNOG" id="COG3265">
    <property type="taxonomic scope" value="Bacteria"/>
</dbReference>
<dbReference type="HOGENOM" id="CLU_077168_1_0_6"/>
<dbReference type="InParanoid" id="P39208"/>
<dbReference type="OMA" id="YEGDDYH"/>
<dbReference type="OrthoDB" id="9795716at2"/>
<dbReference type="PhylomeDB" id="P39208"/>
<dbReference type="BioCyc" id="EcoCyc:GLUCONOKINI-MONOMER"/>
<dbReference type="BioCyc" id="MetaCyc:GLUCONOKINI-MONOMER"/>
<dbReference type="UniPathway" id="UPA00793"/>
<dbReference type="PRO" id="PR:P39208"/>
<dbReference type="Proteomes" id="UP000000625">
    <property type="component" value="Chromosome"/>
</dbReference>
<dbReference type="GO" id="GO:0005524">
    <property type="term" value="F:ATP binding"/>
    <property type="evidence" value="ECO:0007669"/>
    <property type="project" value="UniProtKB-KW"/>
</dbReference>
<dbReference type="GO" id="GO:0046316">
    <property type="term" value="F:gluconokinase activity"/>
    <property type="evidence" value="ECO:0000314"/>
    <property type="project" value="EcoCyc"/>
</dbReference>
<dbReference type="GO" id="GO:0019521">
    <property type="term" value="P:D-gluconate metabolic process"/>
    <property type="evidence" value="ECO:0000315"/>
    <property type="project" value="EcoCyc"/>
</dbReference>
<dbReference type="GO" id="GO:0046183">
    <property type="term" value="P:L-idonate catabolic process"/>
    <property type="evidence" value="ECO:0000315"/>
    <property type="project" value="EcoCyc"/>
</dbReference>
<dbReference type="CDD" id="cd02021">
    <property type="entry name" value="GntK"/>
    <property type="match status" value="1"/>
</dbReference>
<dbReference type="FunFam" id="3.40.50.300:FF:000522">
    <property type="entry name" value="Gluconokinase"/>
    <property type="match status" value="1"/>
</dbReference>
<dbReference type="Gene3D" id="3.40.50.300">
    <property type="entry name" value="P-loop containing nucleotide triphosphate hydrolases"/>
    <property type="match status" value="1"/>
</dbReference>
<dbReference type="InterPro" id="IPR027417">
    <property type="entry name" value="P-loop_NTPase"/>
</dbReference>
<dbReference type="InterPro" id="IPR031322">
    <property type="entry name" value="Shikimate/glucono_kinase"/>
</dbReference>
<dbReference type="InterPro" id="IPR006001">
    <property type="entry name" value="Therm_gnt_kin"/>
</dbReference>
<dbReference type="NCBIfam" id="NF007336">
    <property type="entry name" value="PRK09825.1"/>
    <property type="match status" value="1"/>
</dbReference>
<dbReference type="NCBIfam" id="TIGR01313">
    <property type="entry name" value="therm_gnt_kin"/>
    <property type="match status" value="1"/>
</dbReference>
<dbReference type="PANTHER" id="PTHR43442">
    <property type="entry name" value="GLUCONOKINASE-RELATED"/>
    <property type="match status" value="1"/>
</dbReference>
<dbReference type="PANTHER" id="PTHR43442:SF3">
    <property type="entry name" value="GLUCONOKINASE-RELATED"/>
    <property type="match status" value="1"/>
</dbReference>
<dbReference type="Pfam" id="PF01202">
    <property type="entry name" value="SKI"/>
    <property type="match status" value="1"/>
</dbReference>
<dbReference type="SUPFAM" id="SSF52540">
    <property type="entry name" value="P-loop containing nucleoside triphosphate hydrolases"/>
    <property type="match status" value="1"/>
</dbReference>
<gene>
    <name type="primary">idnK</name>
    <name type="synonym">gntV</name>
    <name type="ordered locus">b4268</name>
    <name type="ordered locus">JW4225</name>
</gene>
<organism>
    <name type="scientific">Escherichia coli (strain K12)</name>
    <dbReference type="NCBI Taxonomy" id="83333"/>
    <lineage>
        <taxon>Bacteria</taxon>
        <taxon>Pseudomonadati</taxon>
        <taxon>Pseudomonadota</taxon>
        <taxon>Gammaproteobacteria</taxon>
        <taxon>Enterobacterales</taxon>
        <taxon>Enterobacteriaceae</taxon>
        <taxon>Escherichia</taxon>
    </lineage>
</organism>
<keyword id="KW-0067">ATP-binding</keyword>
<keyword id="KW-0311">Gluconate utilization</keyword>
<keyword id="KW-0418">Kinase</keyword>
<keyword id="KW-0547">Nucleotide-binding</keyword>
<keyword id="KW-1185">Reference proteome</keyword>
<keyword id="KW-0808">Transferase</keyword>
<protein>
    <recommendedName>
        <fullName>Thermosensitive gluconokinase</fullName>
        <ecNumber>2.7.1.12</ecNumber>
    </recommendedName>
    <alternativeName>
        <fullName>Gluconate kinase 1</fullName>
    </alternativeName>
</protein>
<comment type="catalytic activity">
    <reaction>
        <text>D-gluconate + ATP = 6-phospho-D-gluconate + ADP + H(+)</text>
        <dbReference type="Rhea" id="RHEA:19433"/>
        <dbReference type="ChEBI" id="CHEBI:15378"/>
        <dbReference type="ChEBI" id="CHEBI:18391"/>
        <dbReference type="ChEBI" id="CHEBI:30616"/>
        <dbReference type="ChEBI" id="CHEBI:58759"/>
        <dbReference type="ChEBI" id="CHEBI:456216"/>
        <dbReference type="EC" id="2.7.1.12"/>
    </reaction>
</comment>
<comment type="pathway">
    <text>Carbohydrate acid metabolism; L-idonate degradation.</text>
</comment>
<comment type="similarity">
    <text evidence="2">Belongs to the gluconokinase GntK/GntV family.</text>
</comment>
<evidence type="ECO:0000255" key="1"/>
<evidence type="ECO:0000305" key="2"/>
<sequence length="187" mass="21004">MAGESFILMGVSGSGKTLIGSKVAALLSAKFIDGDDLHPAKNIDKMSQGIPLSDEDRLPWLERLNDASYSLYKKNETGFIVCSSLKKQYRDILRKGSPHVHFLWLDGDYETILARMQRRAGHFMPVALLKSQFEALERPQADEQDIVRIDINHDIANVTEQCRQAVLAIRQNRICAKEGSASDQRCE</sequence>
<proteinExistence type="inferred from homology"/>
<accession>P39208</accession>
<accession>Q2M641</accession>
<reference key="1">
    <citation type="journal article" date="1995" name="Nucleic Acids Res.">
        <title>Analysis of the Escherichia coli genome VI: DNA sequence of the region from 92.8 through 100 minutes.</title>
        <authorList>
            <person name="Burland V.D."/>
            <person name="Plunkett G. III"/>
            <person name="Sofia H.J."/>
            <person name="Daniels D.L."/>
            <person name="Blattner F.R."/>
        </authorList>
    </citation>
    <scope>NUCLEOTIDE SEQUENCE [LARGE SCALE GENOMIC DNA]</scope>
    <source>
        <strain>K12 / MG1655 / ATCC 47076</strain>
    </source>
</reference>
<reference key="2">
    <citation type="journal article" date="1997" name="Science">
        <title>The complete genome sequence of Escherichia coli K-12.</title>
        <authorList>
            <person name="Blattner F.R."/>
            <person name="Plunkett G. III"/>
            <person name="Bloch C.A."/>
            <person name="Perna N.T."/>
            <person name="Burland V."/>
            <person name="Riley M."/>
            <person name="Collado-Vides J."/>
            <person name="Glasner J.D."/>
            <person name="Rode C.K."/>
            <person name="Mayhew G.F."/>
            <person name="Gregor J."/>
            <person name="Davis N.W."/>
            <person name="Kirkpatrick H.A."/>
            <person name="Goeden M.A."/>
            <person name="Rose D.J."/>
            <person name="Mau B."/>
            <person name="Shao Y."/>
        </authorList>
    </citation>
    <scope>NUCLEOTIDE SEQUENCE [LARGE SCALE GENOMIC DNA]</scope>
    <source>
        <strain>K12 / MG1655 / ATCC 47076</strain>
    </source>
</reference>
<reference key="3">
    <citation type="journal article" date="2006" name="Mol. Syst. Biol.">
        <title>Highly accurate genome sequences of Escherichia coli K-12 strains MG1655 and W3110.</title>
        <authorList>
            <person name="Hayashi K."/>
            <person name="Morooka N."/>
            <person name="Yamamoto Y."/>
            <person name="Fujita K."/>
            <person name="Isono K."/>
            <person name="Choi S."/>
            <person name="Ohtsubo E."/>
            <person name="Baba T."/>
            <person name="Wanner B.L."/>
            <person name="Mori H."/>
            <person name="Horiuchi T."/>
        </authorList>
    </citation>
    <scope>NUCLEOTIDE SEQUENCE [LARGE SCALE GENOMIC DNA]</scope>
    <source>
        <strain>K12 / W3110 / ATCC 27325 / DSM 5911</strain>
    </source>
</reference>
<reference key="4">
    <citation type="submission" date="1992-09" db="EMBL/GenBank/DDBJ databases">
        <authorList>
            <person name="Pucci M.J."/>
            <person name="Discotto L.F."/>
            <person name="Dougherty T.J."/>
        </authorList>
    </citation>
    <scope>NUCLEOTIDE SEQUENCE [GENOMIC DNA] OF 7-187</scope>
    <source>
        <strain>B</strain>
    </source>
</reference>
<reference key="5">
    <citation type="journal article" date="1998" name="J. Bacteriol.">
        <title>Sequence analysis of the GntII (subsidiary) system for gluconate metabolism reveals a novel pathway for L-idonic acid catabolism in Escherichia coli.</title>
        <authorList>
            <person name="Bausch C."/>
            <person name="Peekhaus N."/>
            <person name="Utz C."/>
            <person name="Blais T."/>
            <person name="Murray E."/>
            <person name="Lowary T."/>
            <person name="Conway T."/>
        </authorList>
    </citation>
    <scope>FUNCTION</scope>
</reference>
<feature type="chain" id="PRO_0000084151" description="Thermosensitive gluconokinase">
    <location>
        <begin position="1"/>
        <end position="187"/>
    </location>
</feature>
<feature type="binding site" evidence="1">
    <location>
        <begin position="10"/>
        <end position="17"/>
    </location>
    <ligand>
        <name>ATP</name>
        <dbReference type="ChEBI" id="CHEBI:30616"/>
    </ligand>
</feature>
<name>IDNK_ECOLI</name>